<dbReference type="EMBL" id="MF588944">
    <property type="protein sequence ID" value="AUJ88068.1"/>
    <property type="molecule type" value="mRNA"/>
</dbReference>
<dbReference type="SMR" id="A0A2I6EDM2"/>
<dbReference type="GO" id="GO:0005576">
    <property type="term" value="C:extracellular region"/>
    <property type="evidence" value="ECO:0007669"/>
    <property type="project" value="UniProtKB-SubCell"/>
</dbReference>
<dbReference type="GO" id="GO:0008200">
    <property type="term" value="F:ion channel inhibitor activity"/>
    <property type="evidence" value="ECO:0007669"/>
    <property type="project" value="InterPro"/>
</dbReference>
<dbReference type="GO" id="GO:0090729">
    <property type="term" value="F:toxin activity"/>
    <property type="evidence" value="ECO:0007669"/>
    <property type="project" value="UniProtKB-KW"/>
</dbReference>
<dbReference type="InterPro" id="IPR004214">
    <property type="entry name" value="Conotoxin"/>
</dbReference>
<dbReference type="Pfam" id="PF02950">
    <property type="entry name" value="Conotoxin"/>
    <property type="match status" value="1"/>
</dbReference>
<name>CM310_CONRE</name>
<protein>
    <recommendedName>
        <fullName evidence="3">Conotoxin reg3.10</fullName>
        <shortName evidence="6">Rg3.10</shortName>
    </recommendedName>
</protein>
<sequence length="76" mass="8501">MLNMGVVLFICLVLFPLATLQLDADQPVERHAENKRNLNPHERREIIMLALRGVNCCHPNLCIGRSALGRKCTCCG</sequence>
<feature type="signal peptide" evidence="2">
    <location>
        <begin position="1"/>
        <end position="20"/>
    </location>
</feature>
<feature type="propeptide" id="PRO_0000444778" evidence="5">
    <location>
        <begin position="21"/>
        <end position="55"/>
    </location>
</feature>
<feature type="peptide" id="PRO_5014336579" description="Conotoxin reg3.10" evidence="5">
    <location>
        <begin position="56"/>
        <end position="75"/>
    </location>
</feature>
<feature type="modified residue" description="Cysteine amide" evidence="4">
    <location>
        <position position="75"/>
    </location>
</feature>
<feature type="disulfide bond" evidence="1">
    <location>
        <begin position="56"/>
        <end position="74"/>
    </location>
</feature>
<feature type="disulfide bond" evidence="1">
    <location>
        <begin position="57"/>
        <end position="72"/>
    </location>
</feature>
<feature type="disulfide bond" evidence="1">
    <location>
        <begin position="62"/>
        <end position="75"/>
    </location>
</feature>
<keyword id="KW-0027">Amidation</keyword>
<keyword id="KW-1015">Disulfide bond</keyword>
<keyword id="KW-0964">Secreted</keyword>
<keyword id="KW-0732">Signal</keyword>
<keyword id="KW-0800">Toxin</keyword>
<comment type="subcellular location">
    <subcellularLocation>
        <location evidence="5">Secreted</location>
    </subcellularLocation>
</comment>
<comment type="tissue specificity">
    <text evidence="5">Expressed by the venom duct.</text>
</comment>
<comment type="domain">
    <text evidence="4">The cysteine framework is III (CC-C-C-CC). Classified in the M-1 branch, since 1 residue stands between the fourth and the fifth cysteine residues.</text>
</comment>
<comment type="similarity">
    <text evidence="4">Belongs to the conotoxin M superfamily.</text>
</comment>
<reference key="1">
    <citation type="journal article" date="2017" name="FEBS J.">
        <title>Structural plasticity of Mini-M conotoxins: expression of all mini-M subtypes by Conus regius.</title>
        <authorList>
            <person name="Franco A."/>
            <person name="Dovell S."/>
            <person name="Moller C."/>
            <person name="Grandal M."/>
            <person name="Clark E."/>
            <person name="Mari F."/>
        </authorList>
    </citation>
    <scope>NUCLEOTIDE SEQUENCE [MRNA]</scope>
    <source>
        <tissue>Venom duct</tissue>
    </source>
</reference>
<proteinExistence type="inferred from homology"/>
<evidence type="ECO:0000250" key="1">
    <source>
        <dbReference type="UniProtKB" id="Q5EHP3"/>
    </source>
</evidence>
<evidence type="ECO:0000255" key="2"/>
<evidence type="ECO:0000303" key="3">
    <source>
    </source>
</evidence>
<evidence type="ECO:0000305" key="4"/>
<evidence type="ECO:0000305" key="5">
    <source>
    </source>
</evidence>
<evidence type="ECO:0000312" key="6">
    <source>
        <dbReference type="EMBL" id="AUJ88068.1"/>
    </source>
</evidence>
<accession>A0A2I6EDM2</accession>
<organism>
    <name type="scientific">Conus regius</name>
    <name type="common">Crown cone</name>
    <dbReference type="NCBI Taxonomy" id="101314"/>
    <lineage>
        <taxon>Eukaryota</taxon>
        <taxon>Metazoa</taxon>
        <taxon>Spiralia</taxon>
        <taxon>Lophotrochozoa</taxon>
        <taxon>Mollusca</taxon>
        <taxon>Gastropoda</taxon>
        <taxon>Caenogastropoda</taxon>
        <taxon>Neogastropoda</taxon>
        <taxon>Conoidea</taxon>
        <taxon>Conidae</taxon>
        <taxon>Conus</taxon>
        <taxon>Stephanoconus</taxon>
    </lineage>
</organism>